<reference key="1">
    <citation type="journal article" date="1988" name="Virology">
        <title>Cloning and sequencing of genes encoding structural proteins of avian infectious bronchitis virus.</title>
        <authorList>
            <person name="Sutou S."/>
            <person name="Sato S."/>
            <person name="Okabe T."/>
            <person name="Nakai M."/>
            <person name="Sasaki N."/>
        </authorList>
    </citation>
    <scope>NUCLEOTIDE SEQUENCE [GENOMIC RNA]</scope>
</reference>
<accession>P19745</accession>
<sequence length="82" mass="9392">MNNSKDNPFRGAIARKARIYLREGLDCVYFLNKAGQAEPCPACTSLVFQGKTCEEHIHNNNLLSWQVVRQLERQTPQRQSSN</sequence>
<name>NS5B_IBVK</name>
<gene>
    <name type="ORF">5b</name>
</gene>
<comment type="function">
    <text evidence="1">Involved in host translation shutoff without degradating host RNA. By suppressing host gene expression, facilitates the evasion from host type I interferon immune response.</text>
</comment>
<keyword id="KW-1262">Eukaryotic host gene expression shutoff by virus</keyword>
<keyword id="KW-1190">Host gene expression shutoff by virus</keyword>
<keyword id="KW-0945">Host-virus interaction</keyword>
<keyword id="KW-1090">Inhibition of host innate immune response by virus</keyword>
<keyword id="KW-0922">Interferon antiviral system evasion</keyword>
<keyword id="KW-0899">Viral immunoevasion</keyword>
<organism>
    <name type="scientific">Avian infectious bronchitis virus (strain KB8523)</name>
    <name type="common">IBV</name>
    <dbReference type="NCBI Taxonomy" id="11126"/>
    <lineage>
        <taxon>Viruses</taxon>
        <taxon>Riboviria</taxon>
        <taxon>Orthornavirae</taxon>
        <taxon>Pisuviricota</taxon>
        <taxon>Pisoniviricetes</taxon>
        <taxon>Nidovirales</taxon>
        <taxon>Cornidovirineae</taxon>
        <taxon>Coronaviridae</taxon>
        <taxon>Orthocoronavirinae</taxon>
        <taxon>Gammacoronavirus</taxon>
        <taxon>Igacovirus</taxon>
        <taxon>Avian coronavirus</taxon>
    </lineage>
</organism>
<evidence type="ECO:0000250" key="1">
    <source>
        <dbReference type="UniProtKB" id="Q80RZ3"/>
    </source>
</evidence>
<proteinExistence type="inferred from homology"/>
<organismHost>
    <name type="scientific">Gallus gallus</name>
    <name type="common">Chicken</name>
    <dbReference type="NCBI Taxonomy" id="9031"/>
</organismHost>
<feature type="chain" id="PRO_0000106125" description="Host translation inhibitor 5b">
    <location>
        <begin position="1"/>
        <end position="82"/>
    </location>
</feature>
<dbReference type="EMBL" id="M21515">
    <property type="protein sequence ID" value="AAA66582.1"/>
    <property type="molecule type" value="Genomic_RNA"/>
</dbReference>
<dbReference type="PIR" id="F29249">
    <property type="entry name" value="QQIHI2"/>
</dbReference>
<dbReference type="GO" id="GO:0039657">
    <property type="term" value="P:symbiont-mediated suppression of host gene expression"/>
    <property type="evidence" value="ECO:0007669"/>
    <property type="project" value="UniProtKB-KW"/>
</dbReference>
<dbReference type="GO" id="GO:0052170">
    <property type="term" value="P:symbiont-mediated suppression of host innate immune response"/>
    <property type="evidence" value="ECO:0007669"/>
    <property type="project" value="UniProtKB-KW"/>
</dbReference>
<dbReference type="InterPro" id="IPR008458">
    <property type="entry name" value="Acc_prot_5b_avian_CoV"/>
</dbReference>
<dbReference type="Pfam" id="PF05528">
    <property type="entry name" value="Acc5b_avian_CoV"/>
    <property type="match status" value="1"/>
</dbReference>
<protein>
    <recommendedName>
        <fullName>Host translation inhibitor 5b</fullName>
        <shortName>ns5b</shortName>
    </recommendedName>
    <alternativeName>
        <fullName>Accessory protein 5b</fullName>
    </alternativeName>
</protein>